<dbReference type="EMBL" id="CP001089">
    <property type="protein sequence ID" value="ACD95086.1"/>
    <property type="molecule type" value="Genomic_DNA"/>
</dbReference>
<dbReference type="RefSeq" id="WP_012469431.1">
    <property type="nucleotide sequence ID" value="NC_010814.1"/>
</dbReference>
<dbReference type="SMR" id="B3E849"/>
<dbReference type="STRING" id="398767.Glov_1365"/>
<dbReference type="KEGG" id="glo:Glov_1365"/>
<dbReference type="eggNOG" id="COG0200">
    <property type="taxonomic scope" value="Bacteria"/>
</dbReference>
<dbReference type="HOGENOM" id="CLU_055188_4_2_7"/>
<dbReference type="OrthoDB" id="9810293at2"/>
<dbReference type="Proteomes" id="UP000002420">
    <property type="component" value="Chromosome"/>
</dbReference>
<dbReference type="GO" id="GO:0022625">
    <property type="term" value="C:cytosolic large ribosomal subunit"/>
    <property type="evidence" value="ECO:0007669"/>
    <property type="project" value="TreeGrafter"/>
</dbReference>
<dbReference type="GO" id="GO:0019843">
    <property type="term" value="F:rRNA binding"/>
    <property type="evidence" value="ECO:0007669"/>
    <property type="project" value="UniProtKB-UniRule"/>
</dbReference>
<dbReference type="GO" id="GO:0003735">
    <property type="term" value="F:structural constituent of ribosome"/>
    <property type="evidence" value="ECO:0007669"/>
    <property type="project" value="InterPro"/>
</dbReference>
<dbReference type="GO" id="GO:0006412">
    <property type="term" value="P:translation"/>
    <property type="evidence" value="ECO:0007669"/>
    <property type="project" value="UniProtKB-UniRule"/>
</dbReference>
<dbReference type="Gene3D" id="3.100.10.10">
    <property type="match status" value="1"/>
</dbReference>
<dbReference type="HAMAP" id="MF_01341">
    <property type="entry name" value="Ribosomal_uL15"/>
    <property type="match status" value="1"/>
</dbReference>
<dbReference type="InterPro" id="IPR030878">
    <property type="entry name" value="Ribosomal_uL15"/>
</dbReference>
<dbReference type="InterPro" id="IPR021131">
    <property type="entry name" value="Ribosomal_uL15/eL18"/>
</dbReference>
<dbReference type="InterPro" id="IPR036227">
    <property type="entry name" value="Ribosomal_uL15/eL18_sf"/>
</dbReference>
<dbReference type="InterPro" id="IPR005749">
    <property type="entry name" value="Ribosomal_uL15_bac-type"/>
</dbReference>
<dbReference type="InterPro" id="IPR001196">
    <property type="entry name" value="Ribosomal_uL15_CS"/>
</dbReference>
<dbReference type="NCBIfam" id="TIGR01071">
    <property type="entry name" value="rplO_bact"/>
    <property type="match status" value="1"/>
</dbReference>
<dbReference type="PANTHER" id="PTHR12934">
    <property type="entry name" value="50S RIBOSOMAL PROTEIN L15"/>
    <property type="match status" value="1"/>
</dbReference>
<dbReference type="PANTHER" id="PTHR12934:SF11">
    <property type="entry name" value="LARGE RIBOSOMAL SUBUNIT PROTEIN UL15M"/>
    <property type="match status" value="1"/>
</dbReference>
<dbReference type="Pfam" id="PF00828">
    <property type="entry name" value="Ribosomal_L27A"/>
    <property type="match status" value="1"/>
</dbReference>
<dbReference type="SUPFAM" id="SSF52080">
    <property type="entry name" value="Ribosomal proteins L15p and L18e"/>
    <property type="match status" value="1"/>
</dbReference>
<dbReference type="PROSITE" id="PS00475">
    <property type="entry name" value="RIBOSOMAL_L15"/>
    <property type="match status" value="1"/>
</dbReference>
<gene>
    <name evidence="1" type="primary">rplO</name>
    <name type="ordered locus">Glov_1365</name>
</gene>
<protein>
    <recommendedName>
        <fullName evidence="1">Large ribosomal subunit protein uL15</fullName>
    </recommendedName>
    <alternativeName>
        <fullName evidence="3">50S ribosomal protein L15</fullName>
    </alternativeName>
</protein>
<reference key="1">
    <citation type="submission" date="2008-05" db="EMBL/GenBank/DDBJ databases">
        <title>Complete sequence of chromosome of Geobacter lovleyi SZ.</title>
        <authorList>
            <consortium name="US DOE Joint Genome Institute"/>
            <person name="Lucas S."/>
            <person name="Copeland A."/>
            <person name="Lapidus A."/>
            <person name="Glavina del Rio T."/>
            <person name="Dalin E."/>
            <person name="Tice H."/>
            <person name="Bruce D."/>
            <person name="Goodwin L."/>
            <person name="Pitluck S."/>
            <person name="Chertkov O."/>
            <person name="Meincke L."/>
            <person name="Brettin T."/>
            <person name="Detter J.C."/>
            <person name="Han C."/>
            <person name="Tapia R."/>
            <person name="Kuske C.R."/>
            <person name="Schmutz J."/>
            <person name="Larimer F."/>
            <person name="Land M."/>
            <person name="Hauser L."/>
            <person name="Kyrpides N."/>
            <person name="Mikhailova N."/>
            <person name="Sung Y."/>
            <person name="Fletcher K.E."/>
            <person name="Ritalahti K.M."/>
            <person name="Loeffler F.E."/>
            <person name="Richardson P."/>
        </authorList>
    </citation>
    <scope>NUCLEOTIDE SEQUENCE [LARGE SCALE GENOMIC DNA]</scope>
    <source>
        <strain>ATCC BAA-1151 / DSM 17278 / SZ</strain>
    </source>
</reference>
<feature type="chain" id="PRO_1000142825" description="Large ribosomal subunit protein uL15">
    <location>
        <begin position="1"/>
        <end position="149"/>
    </location>
</feature>
<feature type="region of interest" description="Disordered" evidence="2">
    <location>
        <begin position="1"/>
        <end position="61"/>
    </location>
</feature>
<feature type="compositionally biased region" description="Basic residues" evidence="2">
    <location>
        <begin position="30"/>
        <end position="39"/>
    </location>
</feature>
<sequence>MELNSLRPALGSTKNRKRIGRGIGSGHGKTATKGHKGQKARSGGSIKPGFEGGQMPLQRRLPKRGFRPLDRNEYVLINLQQLDVFEAGSCVDRDAMNAKGLLKKSDLPIKVLANGDLTKALTIKADKFSKSAIDKIQAAGGKIEGISAC</sequence>
<accession>B3E849</accession>
<keyword id="KW-1185">Reference proteome</keyword>
<keyword id="KW-0687">Ribonucleoprotein</keyword>
<keyword id="KW-0689">Ribosomal protein</keyword>
<keyword id="KW-0694">RNA-binding</keyword>
<keyword id="KW-0699">rRNA-binding</keyword>
<proteinExistence type="inferred from homology"/>
<name>RL15_TRIL1</name>
<comment type="function">
    <text evidence="1">Binds to the 23S rRNA.</text>
</comment>
<comment type="subunit">
    <text evidence="1">Part of the 50S ribosomal subunit.</text>
</comment>
<comment type="similarity">
    <text evidence="1">Belongs to the universal ribosomal protein uL15 family.</text>
</comment>
<organism>
    <name type="scientific">Trichlorobacter lovleyi (strain ATCC BAA-1151 / DSM 17278 / SZ)</name>
    <name type="common">Geobacter lovleyi</name>
    <dbReference type="NCBI Taxonomy" id="398767"/>
    <lineage>
        <taxon>Bacteria</taxon>
        <taxon>Pseudomonadati</taxon>
        <taxon>Thermodesulfobacteriota</taxon>
        <taxon>Desulfuromonadia</taxon>
        <taxon>Geobacterales</taxon>
        <taxon>Geobacteraceae</taxon>
        <taxon>Trichlorobacter</taxon>
    </lineage>
</organism>
<evidence type="ECO:0000255" key="1">
    <source>
        <dbReference type="HAMAP-Rule" id="MF_01341"/>
    </source>
</evidence>
<evidence type="ECO:0000256" key="2">
    <source>
        <dbReference type="SAM" id="MobiDB-lite"/>
    </source>
</evidence>
<evidence type="ECO:0000305" key="3"/>